<comment type="function">
    <text evidence="1">Involved in the biosynthesis of branched-chain amino acids (BCAA). Catalyzes an alkyl-migration followed by a ketol-acid reduction of (S)-2-acetolactate (S2AL) to yield (R)-2,3-dihydroxy-isovalerate. In the isomerase reaction, S2AL is rearranged via a Mg-dependent methyl migration to produce 3-hydroxy-3-methyl-2-ketobutyrate (HMKB). In the reductase reaction, this 2-ketoacid undergoes a metal-dependent reduction by NADPH to yield (R)-2,3-dihydroxy-isovalerate.</text>
</comment>
<comment type="catalytic activity">
    <reaction evidence="1">
        <text>(2R)-2,3-dihydroxy-3-methylbutanoate + NADP(+) = (2S)-2-acetolactate + NADPH + H(+)</text>
        <dbReference type="Rhea" id="RHEA:22068"/>
        <dbReference type="ChEBI" id="CHEBI:15378"/>
        <dbReference type="ChEBI" id="CHEBI:49072"/>
        <dbReference type="ChEBI" id="CHEBI:57783"/>
        <dbReference type="ChEBI" id="CHEBI:58349"/>
        <dbReference type="ChEBI" id="CHEBI:58476"/>
        <dbReference type="EC" id="1.1.1.86"/>
    </reaction>
</comment>
<comment type="catalytic activity">
    <reaction evidence="1">
        <text>(2R,3R)-2,3-dihydroxy-3-methylpentanoate + NADP(+) = (S)-2-ethyl-2-hydroxy-3-oxobutanoate + NADPH + H(+)</text>
        <dbReference type="Rhea" id="RHEA:13493"/>
        <dbReference type="ChEBI" id="CHEBI:15378"/>
        <dbReference type="ChEBI" id="CHEBI:49256"/>
        <dbReference type="ChEBI" id="CHEBI:49258"/>
        <dbReference type="ChEBI" id="CHEBI:57783"/>
        <dbReference type="ChEBI" id="CHEBI:58349"/>
        <dbReference type="EC" id="1.1.1.86"/>
    </reaction>
</comment>
<comment type="cofactor">
    <cofactor evidence="1">
        <name>Mg(2+)</name>
        <dbReference type="ChEBI" id="CHEBI:18420"/>
    </cofactor>
    <text evidence="1">Binds 2 magnesium ions per subunit.</text>
</comment>
<comment type="pathway">
    <text evidence="1">Amino-acid biosynthesis; L-isoleucine biosynthesis; L-isoleucine from 2-oxobutanoate: step 2/4.</text>
</comment>
<comment type="pathway">
    <text evidence="1">Amino-acid biosynthesis; L-valine biosynthesis; L-valine from pyruvate: step 2/4.</text>
</comment>
<comment type="similarity">
    <text evidence="1">Belongs to the ketol-acid reductoisomerase family.</text>
</comment>
<dbReference type="EC" id="1.1.1.86" evidence="1"/>
<dbReference type="EMBL" id="AE005673">
    <property type="protein sequence ID" value="AAK24091.1"/>
    <property type="molecule type" value="Genomic_DNA"/>
</dbReference>
<dbReference type="PIR" id="G87511">
    <property type="entry name" value="G87511"/>
</dbReference>
<dbReference type="RefSeq" id="NP_420923.1">
    <property type="nucleotide sequence ID" value="NC_002696.2"/>
</dbReference>
<dbReference type="RefSeq" id="WP_010919981.1">
    <property type="nucleotide sequence ID" value="NC_002696.2"/>
</dbReference>
<dbReference type="SMR" id="Q9A6H4"/>
<dbReference type="STRING" id="190650.CC_2120"/>
<dbReference type="EnsemblBacteria" id="AAK24091">
    <property type="protein sequence ID" value="AAK24091"/>
    <property type="gene ID" value="CC_2120"/>
</dbReference>
<dbReference type="KEGG" id="ccr:CC_2120"/>
<dbReference type="PATRIC" id="fig|190650.5.peg.2140"/>
<dbReference type="eggNOG" id="COG0059">
    <property type="taxonomic scope" value="Bacteria"/>
</dbReference>
<dbReference type="HOGENOM" id="CLU_033821_0_1_5"/>
<dbReference type="BioCyc" id="CAULO:CC2120-MONOMER"/>
<dbReference type="UniPathway" id="UPA00047">
    <property type="reaction ID" value="UER00056"/>
</dbReference>
<dbReference type="UniPathway" id="UPA00049">
    <property type="reaction ID" value="UER00060"/>
</dbReference>
<dbReference type="Proteomes" id="UP000001816">
    <property type="component" value="Chromosome"/>
</dbReference>
<dbReference type="GO" id="GO:0005829">
    <property type="term" value="C:cytosol"/>
    <property type="evidence" value="ECO:0007669"/>
    <property type="project" value="TreeGrafter"/>
</dbReference>
<dbReference type="GO" id="GO:0004455">
    <property type="term" value="F:ketol-acid reductoisomerase activity"/>
    <property type="evidence" value="ECO:0007669"/>
    <property type="project" value="UniProtKB-UniRule"/>
</dbReference>
<dbReference type="GO" id="GO:0000287">
    <property type="term" value="F:magnesium ion binding"/>
    <property type="evidence" value="ECO:0007669"/>
    <property type="project" value="UniProtKB-UniRule"/>
</dbReference>
<dbReference type="GO" id="GO:0050661">
    <property type="term" value="F:NADP binding"/>
    <property type="evidence" value="ECO:0007669"/>
    <property type="project" value="InterPro"/>
</dbReference>
<dbReference type="GO" id="GO:0009097">
    <property type="term" value="P:isoleucine biosynthetic process"/>
    <property type="evidence" value="ECO:0007669"/>
    <property type="project" value="UniProtKB-UniRule"/>
</dbReference>
<dbReference type="GO" id="GO:0009099">
    <property type="term" value="P:L-valine biosynthetic process"/>
    <property type="evidence" value="ECO:0007669"/>
    <property type="project" value="UniProtKB-UniRule"/>
</dbReference>
<dbReference type="FunFam" id="3.40.50.720:FF:000023">
    <property type="entry name" value="Ketol-acid reductoisomerase (NADP(+))"/>
    <property type="match status" value="1"/>
</dbReference>
<dbReference type="Gene3D" id="6.10.240.10">
    <property type="match status" value="1"/>
</dbReference>
<dbReference type="Gene3D" id="3.40.50.720">
    <property type="entry name" value="NAD(P)-binding Rossmann-like Domain"/>
    <property type="match status" value="1"/>
</dbReference>
<dbReference type="HAMAP" id="MF_00435">
    <property type="entry name" value="IlvC"/>
    <property type="match status" value="1"/>
</dbReference>
<dbReference type="InterPro" id="IPR008927">
    <property type="entry name" value="6-PGluconate_DH-like_C_sf"/>
</dbReference>
<dbReference type="InterPro" id="IPR013023">
    <property type="entry name" value="KARI"/>
</dbReference>
<dbReference type="InterPro" id="IPR000506">
    <property type="entry name" value="KARI_C"/>
</dbReference>
<dbReference type="InterPro" id="IPR013116">
    <property type="entry name" value="KARI_N"/>
</dbReference>
<dbReference type="InterPro" id="IPR014359">
    <property type="entry name" value="KARI_prok"/>
</dbReference>
<dbReference type="InterPro" id="IPR036291">
    <property type="entry name" value="NAD(P)-bd_dom_sf"/>
</dbReference>
<dbReference type="NCBIfam" id="TIGR00465">
    <property type="entry name" value="ilvC"/>
    <property type="match status" value="1"/>
</dbReference>
<dbReference type="NCBIfam" id="NF004017">
    <property type="entry name" value="PRK05479.1"/>
    <property type="match status" value="1"/>
</dbReference>
<dbReference type="NCBIfam" id="NF009940">
    <property type="entry name" value="PRK13403.1"/>
    <property type="match status" value="1"/>
</dbReference>
<dbReference type="PANTHER" id="PTHR21371">
    <property type="entry name" value="KETOL-ACID REDUCTOISOMERASE, MITOCHONDRIAL"/>
    <property type="match status" value="1"/>
</dbReference>
<dbReference type="PANTHER" id="PTHR21371:SF1">
    <property type="entry name" value="KETOL-ACID REDUCTOISOMERASE, MITOCHONDRIAL"/>
    <property type="match status" value="1"/>
</dbReference>
<dbReference type="Pfam" id="PF01450">
    <property type="entry name" value="KARI_C"/>
    <property type="match status" value="1"/>
</dbReference>
<dbReference type="Pfam" id="PF07991">
    <property type="entry name" value="KARI_N"/>
    <property type="match status" value="1"/>
</dbReference>
<dbReference type="PIRSF" id="PIRSF000116">
    <property type="entry name" value="IlvC_gammaproteo"/>
    <property type="match status" value="1"/>
</dbReference>
<dbReference type="SUPFAM" id="SSF48179">
    <property type="entry name" value="6-phosphogluconate dehydrogenase C-terminal domain-like"/>
    <property type="match status" value="1"/>
</dbReference>
<dbReference type="SUPFAM" id="SSF51735">
    <property type="entry name" value="NAD(P)-binding Rossmann-fold domains"/>
    <property type="match status" value="1"/>
</dbReference>
<dbReference type="PROSITE" id="PS51851">
    <property type="entry name" value="KARI_C"/>
    <property type="match status" value="1"/>
</dbReference>
<dbReference type="PROSITE" id="PS51850">
    <property type="entry name" value="KARI_N"/>
    <property type="match status" value="1"/>
</dbReference>
<keyword id="KW-0028">Amino-acid biosynthesis</keyword>
<keyword id="KW-0100">Branched-chain amino acid biosynthesis</keyword>
<keyword id="KW-0460">Magnesium</keyword>
<keyword id="KW-0479">Metal-binding</keyword>
<keyword id="KW-0521">NADP</keyword>
<keyword id="KW-0560">Oxidoreductase</keyword>
<keyword id="KW-1185">Reference proteome</keyword>
<accession>Q9A6H4</accession>
<proteinExistence type="inferred from homology"/>
<organism>
    <name type="scientific">Caulobacter vibrioides (strain ATCC 19089 / CIP 103742 / CB 15)</name>
    <name type="common">Caulobacter crescentus</name>
    <dbReference type="NCBI Taxonomy" id="190650"/>
    <lineage>
        <taxon>Bacteria</taxon>
        <taxon>Pseudomonadati</taxon>
        <taxon>Pseudomonadota</taxon>
        <taxon>Alphaproteobacteria</taxon>
        <taxon>Caulobacterales</taxon>
        <taxon>Caulobacteraceae</taxon>
        <taxon>Caulobacter</taxon>
    </lineage>
</organism>
<name>ILVC_CAUVC</name>
<evidence type="ECO:0000255" key="1">
    <source>
        <dbReference type="HAMAP-Rule" id="MF_00435"/>
    </source>
</evidence>
<evidence type="ECO:0000255" key="2">
    <source>
        <dbReference type="PROSITE-ProRule" id="PRU01197"/>
    </source>
</evidence>
<evidence type="ECO:0000255" key="3">
    <source>
        <dbReference type="PROSITE-ProRule" id="PRU01198"/>
    </source>
</evidence>
<reference key="1">
    <citation type="journal article" date="2001" name="Proc. Natl. Acad. Sci. U.S.A.">
        <title>Complete genome sequence of Caulobacter crescentus.</title>
        <authorList>
            <person name="Nierman W.C."/>
            <person name="Feldblyum T.V."/>
            <person name="Laub M.T."/>
            <person name="Paulsen I.T."/>
            <person name="Nelson K.E."/>
            <person name="Eisen J.A."/>
            <person name="Heidelberg J.F."/>
            <person name="Alley M.R.K."/>
            <person name="Ohta N."/>
            <person name="Maddock J.R."/>
            <person name="Potocka I."/>
            <person name="Nelson W.C."/>
            <person name="Newton A."/>
            <person name="Stephens C."/>
            <person name="Phadke N.D."/>
            <person name="Ely B."/>
            <person name="DeBoy R.T."/>
            <person name="Dodson R.J."/>
            <person name="Durkin A.S."/>
            <person name="Gwinn M.L."/>
            <person name="Haft D.H."/>
            <person name="Kolonay J.F."/>
            <person name="Smit J."/>
            <person name="Craven M.B."/>
            <person name="Khouri H.M."/>
            <person name="Shetty J."/>
            <person name="Berry K.J."/>
            <person name="Utterback T.R."/>
            <person name="Tran K."/>
            <person name="Wolf A.M."/>
            <person name="Vamathevan J.J."/>
            <person name="Ermolaeva M.D."/>
            <person name="White O."/>
            <person name="Salzberg S.L."/>
            <person name="Venter J.C."/>
            <person name="Shapiro L."/>
            <person name="Fraser C.M."/>
        </authorList>
    </citation>
    <scope>NUCLEOTIDE SEQUENCE [LARGE SCALE GENOMIC DNA]</scope>
    <source>
        <strain>ATCC 19089 / CIP 103742 / CB 15</strain>
    </source>
</reference>
<gene>
    <name evidence="1" type="primary">ilvC</name>
    <name type="ordered locus">CC_2120</name>
</gene>
<protein>
    <recommendedName>
        <fullName evidence="1">Ketol-acid reductoisomerase (NADP(+))</fullName>
        <shortName evidence="1">KARI</shortName>
        <ecNumber evidence="1">1.1.1.86</ecNumber>
    </recommendedName>
    <alternativeName>
        <fullName evidence="1">Acetohydroxy-acid isomeroreductase</fullName>
        <shortName evidence="1">AHIR</shortName>
    </alternativeName>
    <alternativeName>
        <fullName evidence="1">Alpha-keto-beta-hydroxylacyl reductoisomerase</fullName>
    </alternativeName>
    <alternativeName>
        <fullName evidence="1">Ketol-acid reductoisomerase type 1</fullName>
    </alternativeName>
    <alternativeName>
        <fullName evidence="1">Ketol-acid reductoisomerase type I</fullName>
    </alternativeName>
</protein>
<feature type="chain" id="PRO_0000151300" description="Ketol-acid reductoisomerase (NADP(+))">
    <location>
        <begin position="1"/>
        <end position="339"/>
    </location>
</feature>
<feature type="domain" description="KARI N-terminal Rossmann" evidence="2">
    <location>
        <begin position="1"/>
        <end position="182"/>
    </location>
</feature>
<feature type="domain" description="KARI C-terminal knotted" evidence="3">
    <location>
        <begin position="183"/>
        <end position="328"/>
    </location>
</feature>
<feature type="active site" evidence="1">
    <location>
        <position position="108"/>
    </location>
</feature>
<feature type="binding site" evidence="1">
    <location>
        <begin position="24"/>
        <end position="27"/>
    </location>
    <ligand>
        <name>NADP(+)</name>
        <dbReference type="ChEBI" id="CHEBI:58349"/>
    </ligand>
</feature>
<feature type="binding site" evidence="1">
    <location>
        <position position="48"/>
    </location>
    <ligand>
        <name>NADP(+)</name>
        <dbReference type="ChEBI" id="CHEBI:58349"/>
    </ligand>
</feature>
<feature type="binding site" evidence="1">
    <location>
        <position position="51"/>
    </location>
    <ligand>
        <name>NADP(+)</name>
        <dbReference type="ChEBI" id="CHEBI:58349"/>
    </ligand>
</feature>
<feature type="binding site" evidence="1">
    <location>
        <position position="53"/>
    </location>
    <ligand>
        <name>NADP(+)</name>
        <dbReference type="ChEBI" id="CHEBI:58349"/>
    </ligand>
</feature>
<feature type="binding site" evidence="1">
    <location>
        <begin position="83"/>
        <end position="86"/>
    </location>
    <ligand>
        <name>NADP(+)</name>
        <dbReference type="ChEBI" id="CHEBI:58349"/>
    </ligand>
</feature>
<feature type="binding site" evidence="1">
    <location>
        <position position="134"/>
    </location>
    <ligand>
        <name>NADP(+)</name>
        <dbReference type="ChEBI" id="CHEBI:58349"/>
    </ligand>
</feature>
<feature type="binding site" evidence="1">
    <location>
        <position position="191"/>
    </location>
    <ligand>
        <name>Mg(2+)</name>
        <dbReference type="ChEBI" id="CHEBI:18420"/>
        <label>1</label>
    </ligand>
</feature>
<feature type="binding site" evidence="1">
    <location>
        <position position="191"/>
    </location>
    <ligand>
        <name>Mg(2+)</name>
        <dbReference type="ChEBI" id="CHEBI:18420"/>
        <label>2</label>
    </ligand>
</feature>
<feature type="binding site" evidence="1">
    <location>
        <position position="195"/>
    </location>
    <ligand>
        <name>Mg(2+)</name>
        <dbReference type="ChEBI" id="CHEBI:18420"/>
        <label>1</label>
    </ligand>
</feature>
<feature type="binding site" evidence="1">
    <location>
        <position position="227"/>
    </location>
    <ligand>
        <name>Mg(2+)</name>
        <dbReference type="ChEBI" id="CHEBI:18420"/>
        <label>2</label>
    </ligand>
</feature>
<feature type="binding site" evidence="1">
    <location>
        <position position="231"/>
    </location>
    <ligand>
        <name>Mg(2+)</name>
        <dbReference type="ChEBI" id="CHEBI:18420"/>
        <label>2</label>
    </ligand>
</feature>
<feature type="binding site" evidence="1">
    <location>
        <position position="252"/>
    </location>
    <ligand>
        <name>substrate</name>
    </ligand>
</feature>
<sequence>MRVYYDRDADLARILDRKIAIVGYGSQGHAHALNLRDSGIKNVAVALRAGSPTAKKAEGEGLKVMTVAEAAAWADLIMILAPDEHQAAIYKNEIALNIRDGAALLFAHGLNVHFGLIEPKDTIDVLMVAPKGPGHTVRGEYQKGGGVPCLIAVHHNATGNALDLGLAYASAIGGGRSGIIETNFREECETDLFGEQAVLCGGTVELVRAGFETLVEAGYAPEMAYFECLHELKLIVDLMYEGGIANMNYSISNTAEYGEYVTGPRIITPETKAEMKRVLEDIQSGKFVRDFMLENAVGQPSFKATRRRSAEHQIEEVGARLRGMMPWIAKNKLVDQAKN</sequence>